<evidence type="ECO:0000255" key="1"/>
<evidence type="ECO:0000269" key="2">
    <source>
    </source>
</evidence>
<evidence type="ECO:0000269" key="3">
    <source>
    </source>
</evidence>
<evidence type="ECO:0000269" key="4">
    <source>
    </source>
</evidence>
<evidence type="ECO:0000269" key="5">
    <source>
    </source>
</evidence>
<evidence type="ECO:0000305" key="6"/>
<evidence type="ECO:0000305" key="7">
    <source>
    </source>
</evidence>
<sequence length="70" mass="8072">MWFEILPGLSVMGVCLLIPGLATAYIHRFTNGGKEKRVAHFGYHWSLMERDRRISGVDRYYVSKGLENID</sequence>
<accession>O15239</accession>
<proteinExistence type="evidence at protein level"/>
<reference key="1">
    <citation type="journal article" date="1996" name="Genomics">
        <title>Isolation, mapping, and genomic structure of an X-linked gene for a subunit of human mitochondrial complex I.</title>
        <authorList>
            <person name="Zhuchenko O."/>
            <person name="Wehnert M."/>
            <person name="Bailey J."/>
            <person name="Sun Z.S."/>
            <person name="Lee C.C."/>
        </authorList>
    </citation>
    <scope>NUCLEOTIDE SEQUENCE [MRNA]</scope>
</reference>
<reference key="2">
    <citation type="journal article" date="1997" name="Gene">
        <title>Identification of a new member (ZNF183) of the Ring finger gene family in Xq24-25.</title>
        <authorList>
            <person name="Frattini A."/>
            <person name="Faranda S."/>
            <person name="Bagnasco L."/>
            <person name="Patrosso C."/>
            <person name="Nulli P."/>
            <person name="Zucchi I."/>
            <person name="Vezzoni P."/>
        </authorList>
    </citation>
    <scope>NUCLEOTIDE SEQUENCE [MRNA]</scope>
    <source>
        <tissue>Liver</tissue>
    </source>
</reference>
<reference key="3">
    <citation type="submission" date="1996-04" db="EMBL/GenBank/DDBJ databases">
        <title>hMWFE gene -- component of human mitochondrial complex I.</title>
        <authorList>
            <person name="Zhuchenko O.P."/>
            <person name="Wehnert M."/>
            <person name="Bailey J."/>
            <person name="Sun Z.S."/>
            <person name="Lee C.C."/>
        </authorList>
    </citation>
    <scope>NUCLEOTIDE SEQUENCE [MRNA]</scope>
</reference>
<reference key="4">
    <citation type="journal article" date="2004" name="Genome Res.">
        <title>The status, quality, and expansion of the NIH full-length cDNA project: the Mammalian Gene Collection (MGC).</title>
        <authorList>
            <consortium name="The MGC Project Team"/>
        </authorList>
    </citation>
    <scope>NUCLEOTIDE SEQUENCE [LARGE SCALE MRNA]</scope>
    <source>
        <tissue>Eye</tissue>
    </source>
</reference>
<reference key="5">
    <citation type="journal article" date="2003" name="J. Biol. Chem.">
        <title>The subunit composition of the human NADH dehydrogenase obtained by rapid one-step immunopurification.</title>
        <authorList>
            <person name="Murray J."/>
            <person name="Zhang B."/>
            <person name="Taylor S.W."/>
            <person name="Oglesbee D."/>
            <person name="Fahy E."/>
            <person name="Marusich M.F."/>
            <person name="Ghosh S.S."/>
            <person name="Capaldi R.A."/>
        </authorList>
    </citation>
    <scope>IDENTIFICATION IN THE NADH-UBIQUINONE OXIDOREDUCTASE COMPLEX</scope>
    <scope>IDENTIFICATION BY MASS SPECTROMETRY</scope>
</reference>
<reference key="6">
    <citation type="journal article" date="2016" name="Nature">
        <title>Accessory subunits are integral for assembly and function of human mitochondrial complex I.</title>
        <authorList>
            <person name="Stroud D.A."/>
            <person name="Surgenor E.E."/>
            <person name="Formosa L.E."/>
            <person name="Reljic B."/>
            <person name="Frazier A.E."/>
            <person name="Dibley M.G."/>
            <person name="Osellame L.D."/>
            <person name="Stait T."/>
            <person name="Beilharz T.H."/>
            <person name="Thorburn D.R."/>
            <person name="Salim A."/>
            <person name="Ryan M.T."/>
        </authorList>
    </citation>
    <scope>FUNCTION</scope>
    <scope>IDENTIFICATION IN THE NADH-UBIQUINONE OXIDOREDUCTASE COMPLEX</scope>
</reference>
<reference key="7">
    <citation type="journal article" date="2006" name="Science">
        <title>The consensus coding sequences of human breast and colorectal cancers.</title>
        <authorList>
            <person name="Sjoeblom T."/>
            <person name="Jones S."/>
            <person name="Wood L.D."/>
            <person name="Parsons D.W."/>
            <person name="Lin J."/>
            <person name="Barber T.D."/>
            <person name="Mandelker D."/>
            <person name="Leary R.J."/>
            <person name="Ptak J."/>
            <person name="Silliman N."/>
            <person name="Szabo S."/>
            <person name="Buckhaults P."/>
            <person name="Farrell C."/>
            <person name="Meeh P."/>
            <person name="Markowitz S.D."/>
            <person name="Willis J."/>
            <person name="Dawson D."/>
            <person name="Willson J.K.V."/>
            <person name="Gazdar A.F."/>
            <person name="Hartigan J."/>
            <person name="Wu L."/>
            <person name="Liu C."/>
            <person name="Parmigiani G."/>
            <person name="Park B.H."/>
            <person name="Bachman K.E."/>
            <person name="Papadopoulos N."/>
            <person name="Vogelstein B."/>
            <person name="Kinzler K.W."/>
            <person name="Velculescu V.E."/>
        </authorList>
    </citation>
    <scope>VARIANT [LARGE SCALE ANALYSIS] CYS-53</scope>
</reference>
<reference key="8">
    <citation type="journal article" date="2007" name="Ann. Neurol.">
        <title>X-linked NDUFA1 gene mutations associated with mitochondrial encephalomyopathy.</title>
        <authorList>
            <person name="Fernandez-Moreira D."/>
            <person name="Ugalde C."/>
            <person name="Smeets R."/>
            <person name="Rodenburg R.J.T."/>
            <person name="Lopez-Laso E."/>
            <person name="Ruiz-Falco M.L."/>
            <person name="Briones P."/>
            <person name="Martin M.A."/>
            <person name="Smeitink J.A.M."/>
            <person name="Arenas J."/>
        </authorList>
    </citation>
    <scope>VARIANTS MC1DN12 ARG-8 AND SER-37</scope>
</reference>
<organism>
    <name type="scientific">Homo sapiens</name>
    <name type="common">Human</name>
    <dbReference type="NCBI Taxonomy" id="9606"/>
    <lineage>
        <taxon>Eukaryota</taxon>
        <taxon>Metazoa</taxon>
        <taxon>Chordata</taxon>
        <taxon>Craniata</taxon>
        <taxon>Vertebrata</taxon>
        <taxon>Euteleostomi</taxon>
        <taxon>Mammalia</taxon>
        <taxon>Eutheria</taxon>
        <taxon>Euarchontoglires</taxon>
        <taxon>Primates</taxon>
        <taxon>Haplorrhini</taxon>
        <taxon>Catarrhini</taxon>
        <taxon>Hominidae</taxon>
        <taxon>Homo</taxon>
    </lineage>
</organism>
<dbReference type="EMBL" id="X81900">
    <property type="protein sequence ID" value="CAA57489.1"/>
    <property type="molecule type" value="mRNA"/>
</dbReference>
<dbReference type="EMBL" id="U54993">
    <property type="protein sequence ID" value="AAD00084.1"/>
    <property type="molecule type" value="mRNA"/>
</dbReference>
<dbReference type="EMBL" id="BC000266">
    <property type="protein sequence ID" value="AAH00266.1"/>
    <property type="molecule type" value="mRNA"/>
</dbReference>
<dbReference type="CCDS" id="CCDS14590.1"/>
<dbReference type="RefSeq" id="NP_004532.1">
    <property type="nucleotide sequence ID" value="NM_004541.4"/>
</dbReference>
<dbReference type="PDB" id="5XTC">
    <property type="method" value="EM"/>
    <property type="resolution" value="3.70 A"/>
    <property type="chains" value="S=1-70"/>
</dbReference>
<dbReference type="PDB" id="5XTD">
    <property type="method" value="EM"/>
    <property type="resolution" value="3.70 A"/>
    <property type="chains" value="S=1-70"/>
</dbReference>
<dbReference type="PDB" id="5XTH">
    <property type="method" value="EM"/>
    <property type="resolution" value="3.90 A"/>
    <property type="chains" value="S=1-70"/>
</dbReference>
<dbReference type="PDB" id="5XTI">
    <property type="method" value="EM"/>
    <property type="resolution" value="17.40 A"/>
    <property type="chains" value="BS/S=1-70"/>
</dbReference>
<dbReference type="PDBsum" id="5XTC"/>
<dbReference type="PDBsum" id="5XTD"/>
<dbReference type="PDBsum" id="5XTH"/>
<dbReference type="PDBsum" id="5XTI"/>
<dbReference type="SMR" id="O15239"/>
<dbReference type="BioGRID" id="110774">
    <property type="interactions" value="45"/>
</dbReference>
<dbReference type="ComplexPortal" id="CPX-577">
    <property type="entry name" value="Mitochondrial respiratory chain complex I"/>
</dbReference>
<dbReference type="CORUM" id="O15239"/>
<dbReference type="FunCoup" id="O15239">
    <property type="interactions" value="444"/>
</dbReference>
<dbReference type="IntAct" id="O15239">
    <property type="interactions" value="42"/>
</dbReference>
<dbReference type="MINT" id="O15239"/>
<dbReference type="STRING" id="9606.ENSP00000360492"/>
<dbReference type="BindingDB" id="O15239"/>
<dbReference type="ChEMBL" id="CHEMBL2363065"/>
<dbReference type="DrugBank" id="DB00157">
    <property type="generic name" value="NADH"/>
</dbReference>
<dbReference type="DrugCentral" id="O15239"/>
<dbReference type="GlyGen" id="O15239">
    <property type="glycosylation" value="1 site, 1 O-linked glycan (1 site)"/>
</dbReference>
<dbReference type="iPTMnet" id="O15239"/>
<dbReference type="PhosphoSitePlus" id="O15239"/>
<dbReference type="BioMuta" id="NDUFA1"/>
<dbReference type="jPOST" id="O15239"/>
<dbReference type="MassIVE" id="O15239"/>
<dbReference type="PaxDb" id="9606-ENSP00000360492"/>
<dbReference type="PeptideAtlas" id="O15239"/>
<dbReference type="ProteomicsDB" id="48530"/>
<dbReference type="Pumba" id="O15239"/>
<dbReference type="TopDownProteomics" id="O15239"/>
<dbReference type="Antibodypedia" id="29846">
    <property type="antibodies" value="229 antibodies from 27 providers"/>
</dbReference>
<dbReference type="DNASU" id="4694"/>
<dbReference type="Ensembl" id="ENST00000371437.5">
    <property type="protein sequence ID" value="ENSP00000360492.4"/>
    <property type="gene ID" value="ENSG00000125356.7"/>
</dbReference>
<dbReference type="GeneID" id="4694"/>
<dbReference type="KEGG" id="hsa:4694"/>
<dbReference type="MANE-Select" id="ENST00000371437.5">
    <property type="protein sequence ID" value="ENSP00000360492.4"/>
    <property type="RefSeq nucleotide sequence ID" value="NM_004541.4"/>
    <property type="RefSeq protein sequence ID" value="NP_004532.1"/>
</dbReference>
<dbReference type="AGR" id="HGNC:7683"/>
<dbReference type="CTD" id="4694"/>
<dbReference type="DisGeNET" id="4694"/>
<dbReference type="GeneCards" id="NDUFA1"/>
<dbReference type="GeneReviews" id="NDUFA1"/>
<dbReference type="HGNC" id="HGNC:7683">
    <property type="gene designation" value="NDUFA1"/>
</dbReference>
<dbReference type="HPA" id="ENSG00000125356">
    <property type="expression patterns" value="Low tissue specificity"/>
</dbReference>
<dbReference type="MalaCards" id="NDUFA1"/>
<dbReference type="MIM" id="300078">
    <property type="type" value="gene"/>
</dbReference>
<dbReference type="MIM" id="301020">
    <property type="type" value="phenotype"/>
</dbReference>
<dbReference type="neXtProt" id="NX_O15239"/>
<dbReference type="OpenTargets" id="ENSG00000125356"/>
<dbReference type="Orphanet" id="2609">
    <property type="disease" value="Isolated complex I deficiency"/>
</dbReference>
<dbReference type="PharmGKB" id="PA31489"/>
<dbReference type="VEuPathDB" id="HostDB:ENSG00000125356"/>
<dbReference type="eggNOG" id="ENOG502S3S5">
    <property type="taxonomic scope" value="Eukaryota"/>
</dbReference>
<dbReference type="GeneTree" id="ENSGT00390000007560"/>
<dbReference type="HOGENOM" id="CLU_185502_2_0_1"/>
<dbReference type="InParanoid" id="O15239"/>
<dbReference type="OMA" id="WALMERD"/>
<dbReference type="OrthoDB" id="1920692at2759"/>
<dbReference type="PAN-GO" id="O15239">
    <property type="GO annotations" value="1 GO annotation based on evolutionary models"/>
</dbReference>
<dbReference type="PhylomeDB" id="O15239"/>
<dbReference type="TreeFam" id="TF333394"/>
<dbReference type="BioCyc" id="MetaCyc:HS04875-MONOMER"/>
<dbReference type="PathwayCommons" id="O15239"/>
<dbReference type="Reactome" id="R-HSA-611105">
    <property type="pathway name" value="Respiratory electron transport"/>
</dbReference>
<dbReference type="Reactome" id="R-HSA-6799198">
    <property type="pathway name" value="Complex I biogenesis"/>
</dbReference>
<dbReference type="SignaLink" id="O15239"/>
<dbReference type="SIGNOR" id="O15239"/>
<dbReference type="BioGRID-ORCS" id="4694">
    <property type="hits" value="126 hits in 779 CRISPR screens"/>
</dbReference>
<dbReference type="ChiTaRS" id="NDUFA1">
    <property type="organism name" value="human"/>
</dbReference>
<dbReference type="GeneWiki" id="NADH_dehydrogenase_(ubiquinone),_alpha_1"/>
<dbReference type="GenomeRNAi" id="4694"/>
<dbReference type="Pharos" id="O15239">
    <property type="development level" value="Tclin"/>
</dbReference>
<dbReference type="PRO" id="PR:O15239"/>
<dbReference type="Proteomes" id="UP000005640">
    <property type="component" value="Chromosome X"/>
</dbReference>
<dbReference type="RNAct" id="O15239">
    <property type="molecule type" value="protein"/>
</dbReference>
<dbReference type="Bgee" id="ENSG00000125356">
    <property type="expression patterns" value="Expressed in left ventricle myocardium and 206 other cell types or tissues"/>
</dbReference>
<dbReference type="ExpressionAtlas" id="O15239">
    <property type="expression patterns" value="baseline and differential"/>
</dbReference>
<dbReference type="GO" id="GO:0005743">
    <property type="term" value="C:mitochondrial inner membrane"/>
    <property type="evidence" value="ECO:0000314"/>
    <property type="project" value="ComplexPortal"/>
</dbReference>
<dbReference type="GO" id="GO:0031966">
    <property type="term" value="C:mitochondrial membrane"/>
    <property type="evidence" value="ECO:0000314"/>
    <property type="project" value="UniProtKB"/>
</dbReference>
<dbReference type="GO" id="GO:0005739">
    <property type="term" value="C:mitochondrion"/>
    <property type="evidence" value="ECO:0000314"/>
    <property type="project" value="MGI"/>
</dbReference>
<dbReference type="GO" id="GO:0045271">
    <property type="term" value="C:respiratory chain complex I"/>
    <property type="evidence" value="ECO:0000314"/>
    <property type="project" value="UniProtKB"/>
</dbReference>
<dbReference type="GO" id="GO:0008137">
    <property type="term" value="F:NADH dehydrogenase (ubiquinone) activity"/>
    <property type="evidence" value="ECO:0000304"/>
    <property type="project" value="ProtInc"/>
</dbReference>
<dbReference type="GO" id="GO:0009060">
    <property type="term" value="P:aerobic respiration"/>
    <property type="evidence" value="ECO:0000303"/>
    <property type="project" value="ComplexPortal"/>
</dbReference>
<dbReference type="GO" id="GO:0006120">
    <property type="term" value="P:mitochondrial electron transport, NADH to ubiquinone"/>
    <property type="evidence" value="ECO:0000303"/>
    <property type="project" value="UniProtKB"/>
</dbReference>
<dbReference type="GO" id="GO:0042776">
    <property type="term" value="P:proton motive force-driven mitochondrial ATP synthesis"/>
    <property type="evidence" value="ECO:0000303"/>
    <property type="project" value="ComplexPortal"/>
</dbReference>
<dbReference type="InterPro" id="IPR017384">
    <property type="entry name" value="NADH_Ub_cplx-1_asu_su-1"/>
</dbReference>
<dbReference type="PANTHER" id="PTHR17098:SF2">
    <property type="entry name" value="NADH DEHYDROGENASE [UBIQUINONE] 1 ALPHA SUBCOMPLEX SUBUNIT 1"/>
    <property type="match status" value="1"/>
</dbReference>
<dbReference type="PANTHER" id="PTHR17098">
    <property type="entry name" value="NADH-UBIQUINONE OXIDOREDUCTASE MWFE SUBUNIT"/>
    <property type="match status" value="1"/>
</dbReference>
<dbReference type="Pfam" id="PF15879">
    <property type="entry name" value="MWFE"/>
    <property type="match status" value="1"/>
</dbReference>
<dbReference type="PIRSF" id="PIRSF038095">
    <property type="entry name" value="NDUA1"/>
    <property type="match status" value="1"/>
</dbReference>
<gene>
    <name type="primary">NDUFA1</name>
</gene>
<name>NDUA1_HUMAN</name>
<protein>
    <recommendedName>
        <fullName>NADH dehydrogenase [ubiquinone] 1 alpha subcomplex subunit 1</fullName>
    </recommendedName>
    <alternativeName>
        <fullName>Complex I-MWFE</fullName>
        <shortName>CI-MWFE</shortName>
    </alternativeName>
    <alternativeName>
        <fullName>NADH-ubiquinone oxidoreductase MWFE subunit</fullName>
    </alternativeName>
</protein>
<keyword id="KW-0002">3D-structure</keyword>
<keyword id="KW-0225">Disease variant</keyword>
<keyword id="KW-0249">Electron transport</keyword>
<keyword id="KW-0472">Membrane</keyword>
<keyword id="KW-0496">Mitochondrion</keyword>
<keyword id="KW-0999">Mitochondrion inner membrane</keyword>
<keyword id="KW-1274">Primary mitochondrial disease</keyword>
<keyword id="KW-1267">Proteomics identification</keyword>
<keyword id="KW-1185">Reference proteome</keyword>
<keyword id="KW-0679">Respiratory chain</keyword>
<keyword id="KW-0812">Transmembrane</keyword>
<keyword id="KW-1133">Transmembrane helix</keyword>
<keyword id="KW-0813">Transport</keyword>
<feature type="chain" id="PRO_0000118817" description="NADH dehydrogenase [ubiquinone] 1 alpha subcomplex subunit 1">
    <location>
        <begin position="1"/>
        <end position="70"/>
    </location>
</feature>
<feature type="transmembrane region" description="Helical" evidence="1">
    <location>
        <begin position="1"/>
        <end position="21"/>
    </location>
</feature>
<feature type="sequence variant" id="VAR_035099" description="In MC1DN12; dbSNP:rs104894884." evidence="4">
    <original>G</original>
    <variation>R</variation>
    <location>
        <position position="8"/>
    </location>
</feature>
<feature type="sequence variant" id="VAR_014485" description="In dbSNP:rs1801316.">
    <original>G</original>
    <variation>R</variation>
    <location>
        <position position="32"/>
    </location>
</feature>
<feature type="sequence variant" id="VAR_035100" description="In MC1DN12; dbSNP:rs104894885." evidence="4">
    <original>R</original>
    <variation>S</variation>
    <location>
        <position position="37"/>
    </location>
</feature>
<feature type="sequence variant" id="VAR_036173" description="In a colorectal cancer sample; somatic mutation; dbSNP:rs1257734702." evidence="3">
    <original>R</original>
    <variation>C</variation>
    <location>
        <position position="53"/>
    </location>
</feature>
<comment type="function">
    <text evidence="5">Accessory subunit of the mitochondrial membrane respiratory chain NADH dehydrogenase (Complex I), that is believed not to be involved in catalysis. Complex I functions in the transfer of electrons from NADH to the respiratory chain. The immediate electron acceptor for the enzyme is believed to be ubiquinone.</text>
</comment>
<comment type="subunit">
    <text evidence="2 5">Complex I is composed of 45 different subunits.</text>
</comment>
<comment type="subcellular location">
    <subcellularLocation>
        <location evidence="7">Mitochondrion inner membrane</location>
        <topology evidence="1">Single-pass membrane protein</topology>
        <orientation evidence="6">Matrix side</orientation>
    </subcellularLocation>
</comment>
<comment type="tissue specificity">
    <text>Primarily expressed in heart and skeletal muscle.</text>
</comment>
<comment type="disease" evidence="4">
    <disease id="DI-05399">
        <name>Mitochondrial complex I deficiency, nuclear type 12</name>
        <acronym>MC1DN12</acronym>
        <description>A form of mitochondrial complex I deficiency, the most common biochemical signature of mitochondrial disorders, a group of highly heterogeneous conditions characterized by defective oxidative phosphorylation, which collectively affects 1 in 5-10000 live births. Clinical disorders have variable severity, ranging from lethal neonatal disease to adult-onset neurodegenerative disorders. Phenotypes include macrocephaly with progressive leukodystrophy, non-specific encephalopathy, cardiomyopathy, myopathy, liver disease, Leigh syndrome, Leber hereditary optic neuropathy, and some forms of Parkinson disease.</description>
        <dbReference type="MIM" id="301020"/>
    </disease>
    <text>The disease is caused by variants affecting the gene represented in this entry.</text>
</comment>
<comment type="similarity">
    <text evidence="6">Belongs to the complex I NDUFA1 subunit family.</text>
</comment>